<protein>
    <recommendedName>
        <fullName evidence="1">Transcription termination factor Rho</fullName>
        <ecNumber evidence="1">3.6.4.-</ecNumber>
    </recommendedName>
    <alternativeName>
        <fullName evidence="1">ATP-dependent helicase Rho</fullName>
    </alternativeName>
</protein>
<evidence type="ECO:0000255" key="1">
    <source>
        <dbReference type="HAMAP-Rule" id="MF_01884"/>
    </source>
</evidence>
<evidence type="ECO:0000255" key="2">
    <source>
        <dbReference type="PROSITE-ProRule" id="PRU01203"/>
    </source>
</evidence>
<evidence type="ECO:0000256" key="3">
    <source>
        <dbReference type="SAM" id="MobiDB-lite"/>
    </source>
</evidence>
<name>RHO_RICPR</name>
<gene>
    <name evidence="1" type="primary">rho</name>
    <name type="ordered locus">RP526</name>
</gene>
<feature type="chain" id="PRO_0000188975" description="Transcription termination factor Rho">
    <location>
        <begin position="1"/>
        <end position="457"/>
    </location>
</feature>
<feature type="domain" description="Rho RNA-BD" evidence="2">
    <location>
        <begin position="77"/>
        <end position="152"/>
    </location>
</feature>
<feature type="region of interest" description="Disordered" evidence="3">
    <location>
        <begin position="1"/>
        <end position="23"/>
    </location>
</feature>
<feature type="binding site" evidence="1">
    <location>
        <begin position="200"/>
        <end position="205"/>
    </location>
    <ligand>
        <name>ATP</name>
        <dbReference type="ChEBI" id="CHEBI:30616"/>
    </ligand>
</feature>
<feature type="binding site" evidence="1">
    <location>
        <begin position="212"/>
        <end position="217"/>
    </location>
    <ligand>
        <name>ATP</name>
        <dbReference type="ChEBI" id="CHEBI:30616"/>
    </ligand>
</feature>
<feature type="binding site" evidence="1">
    <location>
        <position position="243"/>
    </location>
    <ligand>
        <name>ATP</name>
        <dbReference type="ChEBI" id="CHEBI:30616"/>
    </ligand>
</feature>
<accession>Q9ZD24</accession>
<proteinExistence type="inferred from homology"/>
<dbReference type="EC" id="3.6.4.-" evidence="1"/>
<dbReference type="EMBL" id="AJ235272">
    <property type="protein sequence ID" value="CAA14975.1"/>
    <property type="molecule type" value="Genomic_DNA"/>
</dbReference>
<dbReference type="PIR" id="E71656">
    <property type="entry name" value="E71656"/>
</dbReference>
<dbReference type="RefSeq" id="NP_220899.1">
    <property type="nucleotide sequence ID" value="NC_000963.1"/>
</dbReference>
<dbReference type="RefSeq" id="WP_004597794.1">
    <property type="nucleotide sequence ID" value="NC_000963.1"/>
</dbReference>
<dbReference type="SMR" id="Q9ZD24"/>
<dbReference type="STRING" id="272947.gene:17555606"/>
<dbReference type="EnsemblBacteria" id="CAA14975">
    <property type="protein sequence ID" value="CAA14975"/>
    <property type="gene ID" value="CAA14975"/>
</dbReference>
<dbReference type="GeneID" id="57569648"/>
<dbReference type="KEGG" id="rpr:RP526"/>
<dbReference type="PATRIC" id="fig|272947.5.peg.534"/>
<dbReference type="eggNOG" id="COG1158">
    <property type="taxonomic scope" value="Bacteria"/>
</dbReference>
<dbReference type="HOGENOM" id="CLU_016377_4_3_5"/>
<dbReference type="OrthoDB" id="9805197at2"/>
<dbReference type="Proteomes" id="UP000002480">
    <property type="component" value="Chromosome"/>
</dbReference>
<dbReference type="GO" id="GO:0005829">
    <property type="term" value="C:cytosol"/>
    <property type="evidence" value="ECO:0007669"/>
    <property type="project" value="UniProtKB-ARBA"/>
</dbReference>
<dbReference type="GO" id="GO:0005524">
    <property type="term" value="F:ATP binding"/>
    <property type="evidence" value="ECO:0007669"/>
    <property type="project" value="UniProtKB-UniRule"/>
</dbReference>
<dbReference type="GO" id="GO:0016887">
    <property type="term" value="F:ATP hydrolysis activity"/>
    <property type="evidence" value="ECO:0007669"/>
    <property type="project" value="InterPro"/>
</dbReference>
<dbReference type="GO" id="GO:0008186">
    <property type="term" value="F:ATP-dependent activity, acting on RNA"/>
    <property type="evidence" value="ECO:0007669"/>
    <property type="project" value="InterPro"/>
</dbReference>
<dbReference type="GO" id="GO:0004386">
    <property type="term" value="F:helicase activity"/>
    <property type="evidence" value="ECO:0007669"/>
    <property type="project" value="UniProtKB-UniRule"/>
</dbReference>
<dbReference type="GO" id="GO:0003723">
    <property type="term" value="F:RNA binding"/>
    <property type="evidence" value="ECO:0007669"/>
    <property type="project" value="UniProtKB-UniRule"/>
</dbReference>
<dbReference type="GO" id="GO:0006353">
    <property type="term" value="P:DNA-templated transcription termination"/>
    <property type="evidence" value="ECO:0007669"/>
    <property type="project" value="UniProtKB-UniRule"/>
</dbReference>
<dbReference type="CDD" id="cd04459">
    <property type="entry name" value="Rho_CSD"/>
    <property type="match status" value="1"/>
</dbReference>
<dbReference type="CDD" id="cd01128">
    <property type="entry name" value="rho_factor_C"/>
    <property type="match status" value="1"/>
</dbReference>
<dbReference type="FunFam" id="3.40.50.300:FF:000072">
    <property type="entry name" value="Transcription termination factor Rho"/>
    <property type="match status" value="1"/>
</dbReference>
<dbReference type="Gene3D" id="1.10.720.10">
    <property type="match status" value="1"/>
</dbReference>
<dbReference type="Gene3D" id="2.40.50.140">
    <property type="entry name" value="Nucleic acid-binding proteins"/>
    <property type="match status" value="1"/>
</dbReference>
<dbReference type="Gene3D" id="3.40.50.300">
    <property type="entry name" value="P-loop containing nucleotide triphosphate hydrolases"/>
    <property type="match status" value="1"/>
</dbReference>
<dbReference type="HAMAP" id="MF_01884">
    <property type="entry name" value="Rho"/>
    <property type="match status" value="1"/>
</dbReference>
<dbReference type="InterPro" id="IPR003593">
    <property type="entry name" value="AAA+_ATPase"/>
</dbReference>
<dbReference type="InterPro" id="IPR000194">
    <property type="entry name" value="ATPase_F1/V1/A1_a/bsu_nucl-bd"/>
</dbReference>
<dbReference type="InterPro" id="IPR011129">
    <property type="entry name" value="CSD"/>
</dbReference>
<dbReference type="InterPro" id="IPR012340">
    <property type="entry name" value="NA-bd_OB-fold"/>
</dbReference>
<dbReference type="InterPro" id="IPR027417">
    <property type="entry name" value="P-loop_NTPase"/>
</dbReference>
<dbReference type="InterPro" id="IPR011112">
    <property type="entry name" value="Rho-like_N"/>
</dbReference>
<dbReference type="InterPro" id="IPR041703">
    <property type="entry name" value="Rho_factor_ATP-bd"/>
</dbReference>
<dbReference type="InterPro" id="IPR036269">
    <property type="entry name" value="Rho_N_sf"/>
</dbReference>
<dbReference type="InterPro" id="IPR011113">
    <property type="entry name" value="Rho_RNA-bd"/>
</dbReference>
<dbReference type="InterPro" id="IPR004665">
    <property type="entry name" value="Term_rho"/>
</dbReference>
<dbReference type="NCBIfam" id="NF006886">
    <property type="entry name" value="PRK09376.1"/>
    <property type="match status" value="1"/>
</dbReference>
<dbReference type="NCBIfam" id="TIGR00767">
    <property type="entry name" value="rho"/>
    <property type="match status" value="1"/>
</dbReference>
<dbReference type="PANTHER" id="PTHR46425">
    <property type="entry name" value="TRANSCRIPTION TERMINATION FACTOR RHO"/>
    <property type="match status" value="1"/>
</dbReference>
<dbReference type="PANTHER" id="PTHR46425:SF1">
    <property type="entry name" value="TRANSCRIPTION TERMINATION FACTOR RHO"/>
    <property type="match status" value="1"/>
</dbReference>
<dbReference type="Pfam" id="PF00006">
    <property type="entry name" value="ATP-synt_ab"/>
    <property type="match status" value="1"/>
</dbReference>
<dbReference type="Pfam" id="PF07498">
    <property type="entry name" value="Rho_N"/>
    <property type="match status" value="1"/>
</dbReference>
<dbReference type="Pfam" id="PF07497">
    <property type="entry name" value="Rho_RNA_bind"/>
    <property type="match status" value="1"/>
</dbReference>
<dbReference type="SMART" id="SM00382">
    <property type="entry name" value="AAA"/>
    <property type="match status" value="1"/>
</dbReference>
<dbReference type="SMART" id="SM00357">
    <property type="entry name" value="CSP"/>
    <property type="match status" value="1"/>
</dbReference>
<dbReference type="SMART" id="SM00959">
    <property type="entry name" value="Rho_N"/>
    <property type="match status" value="1"/>
</dbReference>
<dbReference type="SUPFAM" id="SSF50249">
    <property type="entry name" value="Nucleic acid-binding proteins"/>
    <property type="match status" value="1"/>
</dbReference>
<dbReference type="SUPFAM" id="SSF52540">
    <property type="entry name" value="P-loop containing nucleoside triphosphate hydrolases"/>
    <property type="match status" value="1"/>
</dbReference>
<dbReference type="SUPFAM" id="SSF68912">
    <property type="entry name" value="Rho N-terminal domain-like"/>
    <property type="match status" value="1"/>
</dbReference>
<dbReference type="PROSITE" id="PS51856">
    <property type="entry name" value="RHO_RNA_BD"/>
    <property type="match status" value="1"/>
</dbReference>
<comment type="function">
    <text evidence="1">Facilitates transcription termination by a mechanism that involves Rho binding to the nascent RNA, activation of Rho's RNA-dependent ATPase activity, and release of the mRNA from the DNA template.</text>
</comment>
<comment type="subunit">
    <text evidence="1">Homohexamer. The homohexamer assembles into an open ring structure.</text>
</comment>
<comment type="similarity">
    <text evidence="1">Belongs to the Rho family.</text>
</comment>
<reference key="1">
    <citation type="journal article" date="1998" name="Nature">
        <title>The genome sequence of Rickettsia prowazekii and the origin of mitochondria.</title>
        <authorList>
            <person name="Andersson S.G.E."/>
            <person name="Zomorodipour A."/>
            <person name="Andersson J.O."/>
            <person name="Sicheritz-Ponten T."/>
            <person name="Alsmark U.C.M."/>
            <person name="Podowski R.M."/>
            <person name="Naeslund A.K."/>
            <person name="Eriksson A.-S."/>
            <person name="Winkler H.H."/>
            <person name="Kurland C.G."/>
        </authorList>
    </citation>
    <scope>NUCLEOTIDE SEQUENCE [LARGE SCALE GENOMIC DNA]</scope>
    <source>
        <strain>Madrid E</strain>
    </source>
</reference>
<sequence length="457" mass="51240">MNTTNKQLTEELNNTESNNDHNDFAENNIINLKQLKRKLPEELQVQAEELKIENISSLLKQELVFAILKKSVEQGGLIVGEGVLEVLPDGFGFLRSPEVNYLAGPDDIYISPSQIRRFGLRTGDTVEGQIRAPKAGERYFALLKVNRVNFEDPAKAYHRVHFDNLTPLYPDEKLGLELENNSKDSKDFSTRVIELVAPMGKGQRALIVAPPRTGKTVLLQNIAHAITTNNPEVFLIVLLIDERPEEVTDMQRSVRGEVVSSTFDEPASRHVQLAEMVIEKAKRLVEHKKDVVILVDAITRLARAYNTVVPSSGKVLTGGVDANALQRPKRFFGAARNIENGGSLTIIGTALIETGSRMDEVIFEEFKGTGNSEIVLDRKIADKRIYPAIDITRSGTRKEDLLVDKIILNKMWVLRRIIDPMGSSEAIEFLLKKLENTKTNCAFFEMMKSPERPRNGL</sequence>
<keyword id="KW-0067">ATP-binding</keyword>
<keyword id="KW-0347">Helicase</keyword>
<keyword id="KW-0378">Hydrolase</keyword>
<keyword id="KW-0547">Nucleotide-binding</keyword>
<keyword id="KW-1185">Reference proteome</keyword>
<keyword id="KW-0694">RNA-binding</keyword>
<keyword id="KW-0804">Transcription</keyword>
<keyword id="KW-0805">Transcription regulation</keyword>
<keyword id="KW-0806">Transcription termination</keyword>
<organism>
    <name type="scientific">Rickettsia prowazekii (strain Madrid E)</name>
    <dbReference type="NCBI Taxonomy" id="272947"/>
    <lineage>
        <taxon>Bacteria</taxon>
        <taxon>Pseudomonadati</taxon>
        <taxon>Pseudomonadota</taxon>
        <taxon>Alphaproteobacteria</taxon>
        <taxon>Rickettsiales</taxon>
        <taxon>Rickettsiaceae</taxon>
        <taxon>Rickettsieae</taxon>
        <taxon>Rickettsia</taxon>
        <taxon>typhus group</taxon>
    </lineage>
</organism>